<protein>
    <recommendedName>
        <fullName evidence="4">ASI1-immunoprecipitated protein 1</fullName>
    </recommendedName>
    <alternativeName>
        <fullName evidence="5">Protein ENHANCED DOWNY MILDEW 3</fullName>
    </alternativeName>
</protein>
<gene>
    <name evidence="4" type="primary">AIPP1</name>
    <name evidence="5" type="synonym">EDM3</name>
    <name evidence="6" type="ordered locus">At1g05970</name>
    <name evidence="7" type="ORF">T21E18.3</name>
</gene>
<feature type="chain" id="PRO_0000458551" description="ASI1-immunoprecipitated protein 1">
    <location>
        <begin position="1"/>
        <end position="200"/>
    </location>
</feature>
<feature type="domain" description="RRM" evidence="1">
    <location>
        <begin position="18"/>
        <end position="101"/>
    </location>
</feature>
<feature type="splice variant" id="VSP_061955" description="In isoform 2.">
    <location>
        <begin position="150"/>
        <end position="151"/>
    </location>
</feature>
<sequence>MATPEEVAYEKFLERVRRTVYVDELTPLATAPVISSAFNQFGTVKKVSFIPNYLGPKELPMGVLVEMENEEMTQAVISTVSQLPFMVAGMPRPVRACAAEPNMFVDKPKKPGRTVRFRWIKPNDPDFDKARRVKRLARKHSAENSFMLKKQLEEAEKLSKQQAETAVTHHKKFEMMDKLLYDGVAQKLAGRYDLKGFPYR</sequence>
<name>AIPP1_ARATH</name>
<organism>
    <name type="scientific">Arabidopsis thaliana</name>
    <name type="common">Mouse-ear cress</name>
    <dbReference type="NCBI Taxonomy" id="3702"/>
    <lineage>
        <taxon>Eukaryota</taxon>
        <taxon>Viridiplantae</taxon>
        <taxon>Streptophyta</taxon>
        <taxon>Embryophyta</taxon>
        <taxon>Tracheophyta</taxon>
        <taxon>Spermatophyta</taxon>
        <taxon>Magnoliopsida</taxon>
        <taxon>eudicotyledons</taxon>
        <taxon>Gunneridae</taxon>
        <taxon>Pentapetalae</taxon>
        <taxon>rosids</taxon>
        <taxon>malvids</taxon>
        <taxon>Brassicales</taxon>
        <taxon>Brassicaceae</taxon>
        <taxon>Camelineae</taxon>
        <taxon>Arabidopsis</taxon>
    </lineage>
</organism>
<accession>Q9LNE8</accession>
<accession>Q8L7G5</accession>
<reference key="1">
    <citation type="journal article" date="2000" name="Nature">
        <title>Sequence and analysis of chromosome 1 of the plant Arabidopsis thaliana.</title>
        <authorList>
            <person name="Theologis A."/>
            <person name="Ecker J.R."/>
            <person name="Palm C.J."/>
            <person name="Federspiel N.A."/>
            <person name="Kaul S."/>
            <person name="White O."/>
            <person name="Alonso J."/>
            <person name="Altafi H."/>
            <person name="Araujo R."/>
            <person name="Bowman C.L."/>
            <person name="Brooks S.Y."/>
            <person name="Buehler E."/>
            <person name="Chan A."/>
            <person name="Chao Q."/>
            <person name="Chen H."/>
            <person name="Cheuk R.F."/>
            <person name="Chin C.W."/>
            <person name="Chung M.K."/>
            <person name="Conn L."/>
            <person name="Conway A.B."/>
            <person name="Conway A.R."/>
            <person name="Creasy T.H."/>
            <person name="Dewar K."/>
            <person name="Dunn P."/>
            <person name="Etgu P."/>
            <person name="Feldblyum T.V."/>
            <person name="Feng J.-D."/>
            <person name="Fong B."/>
            <person name="Fujii C.Y."/>
            <person name="Gill J.E."/>
            <person name="Goldsmith A.D."/>
            <person name="Haas B."/>
            <person name="Hansen N.F."/>
            <person name="Hughes B."/>
            <person name="Huizar L."/>
            <person name="Hunter J.L."/>
            <person name="Jenkins J."/>
            <person name="Johnson-Hopson C."/>
            <person name="Khan S."/>
            <person name="Khaykin E."/>
            <person name="Kim C.J."/>
            <person name="Koo H.L."/>
            <person name="Kremenetskaia I."/>
            <person name="Kurtz D.B."/>
            <person name="Kwan A."/>
            <person name="Lam B."/>
            <person name="Langin-Hooper S."/>
            <person name="Lee A."/>
            <person name="Lee J.M."/>
            <person name="Lenz C.A."/>
            <person name="Li J.H."/>
            <person name="Li Y.-P."/>
            <person name="Lin X."/>
            <person name="Liu S.X."/>
            <person name="Liu Z.A."/>
            <person name="Luros J.S."/>
            <person name="Maiti R."/>
            <person name="Marziali A."/>
            <person name="Militscher J."/>
            <person name="Miranda M."/>
            <person name="Nguyen M."/>
            <person name="Nierman W.C."/>
            <person name="Osborne B.I."/>
            <person name="Pai G."/>
            <person name="Peterson J."/>
            <person name="Pham P.K."/>
            <person name="Rizzo M."/>
            <person name="Rooney T."/>
            <person name="Rowley D."/>
            <person name="Sakano H."/>
            <person name="Salzberg S.L."/>
            <person name="Schwartz J.R."/>
            <person name="Shinn P."/>
            <person name="Southwick A.M."/>
            <person name="Sun H."/>
            <person name="Tallon L.J."/>
            <person name="Tambunga G."/>
            <person name="Toriumi M.J."/>
            <person name="Town C.D."/>
            <person name="Utterback T."/>
            <person name="Van Aken S."/>
            <person name="Vaysberg M."/>
            <person name="Vysotskaia V.S."/>
            <person name="Walker M."/>
            <person name="Wu D."/>
            <person name="Yu G."/>
            <person name="Fraser C.M."/>
            <person name="Venter J.C."/>
            <person name="Davis R.W."/>
        </authorList>
    </citation>
    <scope>NUCLEOTIDE SEQUENCE [LARGE SCALE GENOMIC DNA]</scope>
    <source>
        <strain>cv. Columbia</strain>
    </source>
</reference>
<reference key="2">
    <citation type="journal article" date="2017" name="Plant J.">
        <title>Araport11: a complete reannotation of the Arabidopsis thaliana reference genome.</title>
        <authorList>
            <person name="Cheng C.Y."/>
            <person name="Krishnakumar V."/>
            <person name="Chan A.P."/>
            <person name="Thibaud-Nissen F."/>
            <person name="Schobel S."/>
            <person name="Town C.D."/>
        </authorList>
    </citation>
    <scope>GENOME REANNOTATION</scope>
    <source>
        <strain>cv. Columbia</strain>
    </source>
</reference>
<reference key="3">
    <citation type="journal article" date="2003" name="Science">
        <title>Empirical analysis of transcriptional activity in the Arabidopsis genome.</title>
        <authorList>
            <person name="Yamada K."/>
            <person name="Lim J."/>
            <person name="Dale J.M."/>
            <person name="Chen H."/>
            <person name="Shinn P."/>
            <person name="Palm C.J."/>
            <person name="Southwick A.M."/>
            <person name="Wu H.C."/>
            <person name="Kim C.J."/>
            <person name="Nguyen M."/>
            <person name="Pham P.K."/>
            <person name="Cheuk R.F."/>
            <person name="Karlin-Newmann G."/>
            <person name="Liu S.X."/>
            <person name="Lam B."/>
            <person name="Sakano H."/>
            <person name="Wu T."/>
            <person name="Yu G."/>
            <person name="Miranda M."/>
            <person name="Quach H.L."/>
            <person name="Tripp M."/>
            <person name="Chang C.H."/>
            <person name="Lee J.M."/>
            <person name="Toriumi M.J."/>
            <person name="Chan M.M."/>
            <person name="Tang C.C."/>
            <person name="Onodera C.S."/>
            <person name="Deng J.M."/>
            <person name="Akiyama K."/>
            <person name="Ansari Y."/>
            <person name="Arakawa T."/>
            <person name="Banh J."/>
            <person name="Banno F."/>
            <person name="Bowser L."/>
            <person name="Brooks S.Y."/>
            <person name="Carninci P."/>
            <person name="Chao Q."/>
            <person name="Choy N."/>
            <person name="Enju A."/>
            <person name="Goldsmith A.D."/>
            <person name="Gurjal M."/>
            <person name="Hansen N.F."/>
            <person name="Hayashizaki Y."/>
            <person name="Johnson-Hopson C."/>
            <person name="Hsuan V.W."/>
            <person name="Iida K."/>
            <person name="Karnes M."/>
            <person name="Khan S."/>
            <person name="Koesema E."/>
            <person name="Ishida J."/>
            <person name="Jiang P.X."/>
            <person name="Jones T."/>
            <person name="Kawai J."/>
            <person name="Kamiya A."/>
            <person name="Meyers C."/>
            <person name="Nakajima M."/>
            <person name="Narusaka M."/>
            <person name="Seki M."/>
            <person name="Sakurai T."/>
            <person name="Satou M."/>
            <person name="Tamse R."/>
            <person name="Vaysberg M."/>
            <person name="Wallender E.K."/>
            <person name="Wong C."/>
            <person name="Yamamura Y."/>
            <person name="Yuan S."/>
            <person name="Shinozaki K."/>
            <person name="Davis R.W."/>
            <person name="Theologis A."/>
            <person name="Ecker J.R."/>
        </authorList>
    </citation>
    <scope>NUCLEOTIDE SEQUENCE [LARGE SCALE MRNA] (ISOFORM 2)</scope>
    <source>
        <strain>cv. Columbia</strain>
    </source>
</reference>
<reference key="4">
    <citation type="submission" date="2006-07" db="EMBL/GenBank/DDBJ databases">
        <title>Large-scale analysis of RIKEN Arabidopsis full-length (RAFL) cDNAs.</title>
        <authorList>
            <person name="Totoki Y."/>
            <person name="Seki M."/>
            <person name="Ishida J."/>
            <person name="Nakajima M."/>
            <person name="Enju A."/>
            <person name="Kamiya A."/>
            <person name="Narusaka M."/>
            <person name="Shin-i T."/>
            <person name="Nakagawa M."/>
            <person name="Sakamoto N."/>
            <person name="Oishi K."/>
            <person name="Kohara Y."/>
            <person name="Kobayashi M."/>
            <person name="Toyoda A."/>
            <person name="Sakaki Y."/>
            <person name="Sakurai T."/>
            <person name="Iida K."/>
            <person name="Akiyama K."/>
            <person name="Satou M."/>
            <person name="Toyoda T."/>
            <person name="Konagaya A."/>
            <person name="Carninci P."/>
            <person name="Kawai J."/>
            <person name="Hayashizaki Y."/>
            <person name="Shinozaki K."/>
        </authorList>
    </citation>
    <scope>NUCLEOTIDE SEQUENCE [LARGE SCALE MRNA]</scope>
    <source>
        <strain>cv. Columbia</strain>
    </source>
</reference>
<reference key="5">
    <citation type="journal article" date="2017" name="Proc. Natl. Acad. Sci. U.S.A.">
        <title>A protein complex regulates RNA processing of intronic heterochromatin-containing genes in Arabidopsis.</title>
        <authorList>
            <person name="Duan C.-G."/>
            <person name="Wang X."/>
            <person name="Zhang L."/>
            <person name="Xiong X."/>
            <person name="Zhang Z."/>
            <person name="Tang K."/>
            <person name="Pan L."/>
            <person name="Hsu C.-C."/>
            <person name="Xu H."/>
            <person name="Tao W.A."/>
            <person name="Zhang H."/>
            <person name="Zhu J.-K."/>
        </authorList>
    </citation>
    <scope>FUNCTION</scope>
    <scope>DISRUPTION PHENOTYPE</scope>
    <scope>SUBUNIT</scope>
    <scope>INTERACTION WITH ASI1 AND EDM2</scope>
    <source>
        <strain>cv. Columbia</strain>
    </source>
</reference>
<reference key="6">
    <citation type="journal article" date="2019" name="Plant J.">
        <title>The Arabidopsis RRM domain protein EDM3 mediates race-specific disease resistance by controlling H3K9me2-dependent alternative polyadenylation of RPP7 immune receptor transcripts.</title>
        <authorList>
            <person name="Lai Y."/>
            <person name="Cuzick A."/>
            <person name="Lu X.M."/>
            <person name="Wang J."/>
            <person name="Katiyar N."/>
            <person name="Tsuchiya T."/>
            <person name="Le Roch K."/>
            <person name="McDowell J.M."/>
            <person name="Holub E."/>
            <person name="Eulgem T."/>
        </authorList>
    </citation>
    <scope>FUNCTION</scope>
    <scope>DISRUPTION PHENOTYPE</scope>
    <scope>SUBUNIT</scope>
    <scope>SUBCELLULAR LOCATION</scope>
    <source>
        <strain>cv. Col-5</strain>
        <strain>cv. Columbia</strain>
        <strain>cv. Wassilewskija</strain>
    </source>
</reference>
<keyword id="KW-0025">Alternative splicing</keyword>
<keyword id="KW-0539">Nucleus</keyword>
<keyword id="KW-0611">Plant defense</keyword>
<keyword id="KW-1185">Reference proteome</keyword>
<keyword id="KW-0694">RNA-binding</keyword>
<dbReference type="EMBL" id="AC024174">
    <property type="protein sequence ID" value="AAF80121.1"/>
    <property type="molecule type" value="Genomic_DNA"/>
</dbReference>
<dbReference type="EMBL" id="CP002684">
    <property type="protein sequence ID" value="AEE27925.1"/>
    <property type="molecule type" value="Genomic_DNA"/>
</dbReference>
<dbReference type="EMBL" id="CP002684">
    <property type="protein sequence ID" value="AEE27926.1"/>
    <property type="molecule type" value="Genomic_DNA"/>
</dbReference>
<dbReference type="EMBL" id="AY133717">
    <property type="protein sequence ID" value="AAM91651.1"/>
    <property type="molecule type" value="mRNA"/>
</dbReference>
<dbReference type="EMBL" id="AK228454">
    <property type="protein sequence ID" value="BAF00381.1"/>
    <property type="molecule type" value="mRNA"/>
</dbReference>
<dbReference type="PIR" id="G86194">
    <property type="entry name" value="G86194"/>
</dbReference>
<dbReference type="RefSeq" id="NP_001030978.1">
    <molecule id="Q9LNE8-1"/>
    <property type="nucleotide sequence ID" value="NM_001035901.2"/>
</dbReference>
<dbReference type="RefSeq" id="NP_172088.2">
    <molecule id="Q9LNE8-2"/>
    <property type="nucleotide sequence ID" value="NM_100478.3"/>
</dbReference>
<dbReference type="SMR" id="Q9LNE8"/>
<dbReference type="FunCoup" id="Q9LNE8">
    <property type="interactions" value="1034"/>
</dbReference>
<dbReference type="STRING" id="3702.Q9LNE8"/>
<dbReference type="PaxDb" id="3702-AT1G05970.2"/>
<dbReference type="ProteomicsDB" id="189531"/>
<dbReference type="ProteomicsDB" id="191131"/>
<dbReference type="EnsemblPlants" id="AT1G05970.1">
    <molecule id="Q9LNE8-2"/>
    <property type="protein sequence ID" value="AT1G05970.1"/>
    <property type="gene ID" value="AT1G05970"/>
</dbReference>
<dbReference type="EnsemblPlants" id="AT1G05970.2">
    <molecule id="Q9LNE8-1"/>
    <property type="protein sequence ID" value="AT1G05970.2"/>
    <property type="gene ID" value="AT1G05970"/>
</dbReference>
<dbReference type="GeneID" id="837107"/>
<dbReference type="Gramene" id="AT1G05970.1">
    <molecule id="Q9LNE8-2"/>
    <property type="protein sequence ID" value="AT1G05970.1"/>
    <property type="gene ID" value="AT1G05970"/>
</dbReference>
<dbReference type="Gramene" id="AT1G05970.2">
    <molecule id="Q9LNE8-1"/>
    <property type="protein sequence ID" value="AT1G05970.2"/>
    <property type="gene ID" value="AT1G05970"/>
</dbReference>
<dbReference type="KEGG" id="ath:AT1G05970"/>
<dbReference type="Araport" id="AT1G05970"/>
<dbReference type="TAIR" id="AT1G05970">
    <property type="gene designation" value="AIPP1"/>
</dbReference>
<dbReference type="eggNOG" id="ENOG502QUFQ">
    <property type="taxonomic scope" value="Eukaryota"/>
</dbReference>
<dbReference type="HOGENOM" id="CLU_075419_1_1_1"/>
<dbReference type="OMA" id="MFDDRPI"/>
<dbReference type="PRO" id="PR:Q9LNE8"/>
<dbReference type="Proteomes" id="UP000006548">
    <property type="component" value="Chromosome 1"/>
</dbReference>
<dbReference type="ExpressionAtlas" id="Q9LNE8">
    <property type="expression patterns" value="baseline and differential"/>
</dbReference>
<dbReference type="GO" id="GO:0005634">
    <property type="term" value="C:nucleus"/>
    <property type="evidence" value="ECO:0000314"/>
    <property type="project" value="UniProtKB"/>
</dbReference>
<dbReference type="GO" id="GO:0032991">
    <property type="term" value="C:protein-containing complex"/>
    <property type="evidence" value="ECO:0000353"/>
    <property type="project" value="TAIR"/>
</dbReference>
<dbReference type="GO" id="GO:0003723">
    <property type="term" value="F:RNA binding"/>
    <property type="evidence" value="ECO:0007669"/>
    <property type="project" value="UniProtKB-KW"/>
</dbReference>
<dbReference type="GO" id="GO:0006325">
    <property type="term" value="P:chromatin organization"/>
    <property type="evidence" value="ECO:0000315"/>
    <property type="project" value="UniProtKB"/>
</dbReference>
<dbReference type="GO" id="GO:0006952">
    <property type="term" value="P:defense response"/>
    <property type="evidence" value="ECO:0007669"/>
    <property type="project" value="UniProtKB-KW"/>
</dbReference>
<dbReference type="GO" id="GO:0040029">
    <property type="term" value="P:epigenetic regulation of gene expression"/>
    <property type="evidence" value="ECO:0000315"/>
    <property type="project" value="UniProtKB"/>
</dbReference>
<dbReference type="GO" id="GO:1902290">
    <property type="term" value="P:positive regulation of defense response to oomycetes"/>
    <property type="evidence" value="ECO:0000315"/>
    <property type="project" value="UniProtKB"/>
</dbReference>
<dbReference type="GO" id="GO:0060147">
    <property type="term" value="P:regulation of post-transcriptional gene silencing"/>
    <property type="evidence" value="ECO:0000315"/>
    <property type="project" value="UniProtKB"/>
</dbReference>
<dbReference type="GO" id="GO:0006396">
    <property type="term" value="P:RNA processing"/>
    <property type="evidence" value="ECO:0000315"/>
    <property type="project" value="UniProtKB"/>
</dbReference>
<dbReference type="Gene3D" id="3.30.70.330">
    <property type="match status" value="1"/>
</dbReference>
<dbReference type="InterPro" id="IPR053316">
    <property type="entry name" value="Epigenetic_reg_gene_expr"/>
</dbReference>
<dbReference type="InterPro" id="IPR012677">
    <property type="entry name" value="Nucleotide-bd_a/b_plait_sf"/>
</dbReference>
<dbReference type="InterPro" id="IPR035979">
    <property type="entry name" value="RBD_domain_sf"/>
</dbReference>
<dbReference type="PANTHER" id="PTHR36309">
    <property type="entry name" value="RNA-BINDING (RRM/RBD/RNP MOTIFS) FAMILY PROTEIN"/>
    <property type="match status" value="1"/>
</dbReference>
<dbReference type="PANTHER" id="PTHR36309:SF1">
    <property type="entry name" value="RNA-BINDING (RRM_RBD_RNP MOTIFS) FAMILY PROTEIN"/>
    <property type="match status" value="1"/>
</dbReference>
<dbReference type="SUPFAM" id="SSF54928">
    <property type="entry name" value="RNA-binding domain, RBD"/>
    <property type="match status" value="1"/>
</dbReference>
<evidence type="ECO:0000255" key="1">
    <source>
        <dbReference type="PROSITE-ProRule" id="PRU00176"/>
    </source>
</evidence>
<evidence type="ECO:0000269" key="2">
    <source>
    </source>
</evidence>
<evidence type="ECO:0000269" key="3">
    <source>
    </source>
</evidence>
<evidence type="ECO:0000303" key="4">
    <source>
    </source>
</evidence>
<evidence type="ECO:0000303" key="5">
    <source>
    </source>
</evidence>
<evidence type="ECO:0000312" key="6">
    <source>
        <dbReference type="Araport" id="AT1G05970"/>
    </source>
</evidence>
<evidence type="ECO:0000312" key="7">
    <source>
        <dbReference type="EMBL" id="AAF80121.1"/>
    </source>
</evidence>
<comment type="function">
    <text evidence="2 3">Prevents gene silencing by suppressing CHG methylation as well as histone H3 lysine 9 dimethylation (H3K9me2) status at target loci (PubMed:28808009, PubMed:30407670). Collaboratively with ASI1 and EDM2, the AAE complex regulates alternative RNA processing (e.g. alternative splicing) and epigenetic silencing (e.g. H3K9me2) of intronic heterochromatin-containing genes as well as genic heterochromatin-containing genes by promoting distal 3' polyadenylation, thus being required for the accumulation of their full-length transcripts (PubMed:28808009). May also modulate transposable elements (TE) expression (PubMed:28808009). Mediates RPP7-dependent race-specific disease resistance by promoting histone H3 lysine 9 dimethylation (H3K9me2) at the proximal RPP7 polyadenylation site, thus controlling alternative polyadenylation of RPP7 immune receptor transcripts and facilitating 2-phosphoserine RNAPII occupancy (PubMed:30407670). In cv. Columbia, required for RPP7-dependent disease resistance against the Hyaloperonospora arabidopsidis isolate Hiks1 (PubMed:30407670).</text>
</comment>
<comment type="subunit">
    <text evidence="2 3">Component of the ASI1-AIPP1-EDM2 (AAE) RNA regulatory complex composed of at least AIPP1/EDM3, ASI1 and EDM2 and may contain CPL2, AIPP2 and AIPP3/BDT1 (PubMed:28808009). Binds directly to ASI1 and EDM2 and may function as a bridge protein between them (PubMed:28808009). Co-associates with EDM2 to histone H3 lysine 9 dimethylation (H3K9me2)-marked chromatin and transcripts at a critical proximal polyadenylation site of RPP7 to hamper proximal transcript polyadeylation/termination (PubMed:30407670).</text>
</comment>
<comment type="subcellular location">
    <molecule>Isoform 1</molecule>
    <subcellularLocation>
        <location evidence="3">Nucleus</location>
    </subcellularLocation>
</comment>
<comment type="subcellular location">
    <molecule>Isoform 2</molecule>
    <subcellularLocation>
        <location evidence="3">Nucleus</location>
    </subcellularLocation>
</comment>
<comment type="alternative products">
    <event type="alternative splicing"/>
    <isoform>
        <id>Q9LNE8-1</id>
        <name>1</name>
        <sequence type="displayed"/>
    </isoform>
    <isoform>
        <id>Q9LNE8-2</id>
        <name>2</name>
        <sequence type="described" ref="VSP_061955"/>
    </isoform>
</comment>
<comment type="disruption phenotype">
    <text evidence="2 3">Hyper-dimethylation of histone H3 lysine 9 (H3K9me2) in several genes (PubMed:30407670). Impeded use of distal polyadenylation sites at intronic heterochromatin (HC)-containing genes (e.g. histone demethylase gene IBM1) resulting in a lack of functional full-length transcripts (PubMed:28808009). Silencing of transgenes such as 35S-SUC2 and genome-wide CHG hypermethylation at gene body regions, leading to reduced transcription of several genes (e.g. IBM1) (PubMed:28808009). Abolished expression of At4g16870, a transposable element (TE) of Copia-like retrotransposon origin, associated with methylated status (PubMed:28808009). Compromised RPP7-dependent immunity associated with reduced histone H3 lysine 9 dimethylation (H3K9me2) at the COPIA-R7 retrotransposon 5'LTR present in the first RPP7 intron, and leading to an increased sporulation of the incompatible Hyaloperonospora arabidopsidis (downy mildew) Hpa-Hiks1 isolate, but normal resistance to Hpa-Cala2 and Hpa-Cand5 isolates in cv. Col-5 background; full susceptibility to these isolates is observed in cv. Wassilewskija background (PubMed:30407670).</text>
</comment>
<proteinExistence type="evidence at protein level"/>